<feature type="chain" id="PRO_0000095777" description="Translation initiation factor IF-1">
    <location>
        <begin position="1"/>
        <end position="72"/>
    </location>
</feature>
<feature type="domain" description="S1-like" evidence="1">
    <location>
        <begin position="1"/>
        <end position="72"/>
    </location>
</feature>
<sequence>MAKEGAIEVEGRIIEPLPNAMFRVELDNGHKVLAHISGKMRQHYIRILPEDRVVVELSPYDLTRGRIVYRYK</sequence>
<reference key="1">
    <citation type="journal article" date="2003" name="Nucleic Acids Res.">
        <title>The complete genome sequence and analysis of Corynebacterium diphtheriae NCTC13129.</title>
        <authorList>
            <person name="Cerdeno-Tarraga A.-M."/>
            <person name="Efstratiou A."/>
            <person name="Dover L.G."/>
            <person name="Holden M.T.G."/>
            <person name="Pallen M.J."/>
            <person name="Bentley S.D."/>
            <person name="Besra G.S."/>
            <person name="Churcher C.M."/>
            <person name="James K.D."/>
            <person name="De Zoysa A."/>
            <person name="Chillingworth T."/>
            <person name="Cronin A."/>
            <person name="Dowd L."/>
            <person name="Feltwell T."/>
            <person name="Hamlin N."/>
            <person name="Holroyd S."/>
            <person name="Jagels K."/>
            <person name="Moule S."/>
            <person name="Quail M.A."/>
            <person name="Rabbinowitsch E."/>
            <person name="Rutherford K.M."/>
            <person name="Thomson N.R."/>
            <person name="Unwin L."/>
            <person name="Whitehead S."/>
            <person name="Barrell B.G."/>
            <person name="Parkhill J."/>
        </authorList>
    </citation>
    <scope>NUCLEOTIDE SEQUENCE [LARGE SCALE GENOMIC DNA]</scope>
    <source>
        <strain>ATCC 700971 / NCTC 13129 / Biotype gravis</strain>
    </source>
</reference>
<dbReference type="EMBL" id="BX248355">
    <property type="protein sequence ID" value="CAE49056.1"/>
    <property type="molecule type" value="Genomic_DNA"/>
</dbReference>
<dbReference type="RefSeq" id="WP_004566852.1">
    <property type="nucleotide sequence ID" value="NC_002935.2"/>
</dbReference>
<dbReference type="SMR" id="P61685"/>
<dbReference type="STRING" id="257309.DIP0545"/>
<dbReference type="GeneID" id="97331154"/>
<dbReference type="KEGG" id="cdi:DIP0545"/>
<dbReference type="HOGENOM" id="CLU_151267_1_0_11"/>
<dbReference type="Proteomes" id="UP000002198">
    <property type="component" value="Chromosome"/>
</dbReference>
<dbReference type="GO" id="GO:0005829">
    <property type="term" value="C:cytosol"/>
    <property type="evidence" value="ECO:0007669"/>
    <property type="project" value="TreeGrafter"/>
</dbReference>
<dbReference type="GO" id="GO:0043022">
    <property type="term" value="F:ribosome binding"/>
    <property type="evidence" value="ECO:0007669"/>
    <property type="project" value="UniProtKB-UniRule"/>
</dbReference>
<dbReference type="GO" id="GO:0019843">
    <property type="term" value="F:rRNA binding"/>
    <property type="evidence" value="ECO:0007669"/>
    <property type="project" value="UniProtKB-UniRule"/>
</dbReference>
<dbReference type="GO" id="GO:0003743">
    <property type="term" value="F:translation initiation factor activity"/>
    <property type="evidence" value="ECO:0007669"/>
    <property type="project" value="UniProtKB-UniRule"/>
</dbReference>
<dbReference type="CDD" id="cd04451">
    <property type="entry name" value="S1_IF1"/>
    <property type="match status" value="1"/>
</dbReference>
<dbReference type="FunFam" id="2.40.50.140:FF:000002">
    <property type="entry name" value="Translation initiation factor IF-1"/>
    <property type="match status" value="1"/>
</dbReference>
<dbReference type="Gene3D" id="2.40.50.140">
    <property type="entry name" value="Nucleic acid-binding proteins"/>
    <property type="match status" value="1"/>
</dbReference>
<dbReference type="HAMAP" id="MF_00075">
    <property type="entry name" value="IF_1"/>
    <property type="match status" value="1"/>
</dbReference>
<dbReference type="InterPro" id="IPR012340">
    <property type="entry name" value="NA-bd_OB-fold"/>
</dbReference>
<dbReference type="InterPro" id="IPR006196">
    <property type="entry name" value="RNA-binding_domain_S1_IF1"/>
</dbReference>
<dbReference type="InterPro" id="IPR003029">
    <property type="entry name" value="S1_domain"/>
</dbReference>
<dbReference type="InterPro" id="IPR004368">
    <property type="entry name" value="TIF_IF1"/>
</dbReference>
<dbReference type="NCBIfam" id="TIGR00008">
    <property type="entry name" value="infA"/>
    <property type="match status" value="1"/>
</dbReference>
<dbReference type="PANTHER" id="PTHR33370">
    <property type="entry name" value="TRANSLATION INITIATION FACTOR IF-1, CHLOROPLASTIC"/>
    <property type="match status" value="1"/>
</dbReference>
<dbReference type="PANTHER" id="PTHR33370:SF1">
    <property type="entry name" value="TRANSLATION INITIATION FACTOR IF-1, CHLOROPLASTIC"/>
    <property type="match status" value="1"/>
</dbReference>
<dbReference type="Pfam" id="PF01176">
    <property type="entry name" value="eIF-1a"/>
    <property type="match status" value="1"/>
</dbReference>
<dbReference type="SMART" id="SM00316">
    <property type="entry name" value="S1"/>
    <property type="match status" value="1"/>
</dbReference>
<dbReference type="SUPFAM" id="SSF50249">
    <property type="entry name" value="Nucleic acid-binding proteins"/>
    <property type="match status" value="1"/>
</dbReference>
<dbReference type="PROSITE" id="PS50832">
    <property type="entry name" value="S1_IF1_TYPE"/>
    <property type="match status" value="1"/>
</dbReference>
<accession>P61685</accession>
<organism>
    <name type="scientific">Corynebacterium diphtheriae (strain ATCC 700971 / NCTC 13129 / Biotype gravis)</name>
    <dbReference type="NCBI Taxonomy" id="257309"/>
    <lineage>
        <taxon>Bacteria</taxon>
        <taxon>Bacillati</taxon>
        <taxon>Actinomycetota</taxon>
        <taxon>Actinomycetes</taxon>
        <taxon>Mycobacteriales</taxon>
        <taxon>Corynebacteriaceae</taxon>
        <taxon>Corynebacterium</taxon>
    </lineage>
</organism>
<protein>
    <recommendedName>
        <fullName evidence="1">Translation initiation factor IF-1</fullName>
    </recommendedName>
</protein>
<comment type="function">
    <text evidence="1">One of the essential components for the initiation of protein synthesis. Stabilizes the binding of IF-2 and IF-3 on the 30S subunit to which N-formylmethionyl-tRNA(fMet) subsequently binds. Helps modulate mRNA selection, yielding the 30S pre-initiation complex (PIC). Upon addition of the 50S ribosomal subunit IF-1, IF-2 and IF-3 are released leaving the mature 70S translation initiation complex.</text>
</comment>
<comment type="subunit">
    <text evidence="1">Component of the 30S ribosomal translation pre-initiation complex which assembles on the 30S ribosome in the order IF-2 and IF-3, IF-1 and N-formylmethionyl-tRNA(fMet); mRNA recruitment can occur at any time during PIC assembly.</text>
</comment>
<comment type="subcellular location">
    <subcellularLocation>
        <location evidence="1">Cytoplasm</location>
    </subcellularLocation>
</comment>
<comment type="similarity">
    <text evidence="1">Belongs to the IF-1 family.</text>
</comment>
<name>IF1_CORDI</name>
<keyword id="KW-0963">Cytoplasm</keyword>
<keyword id="KW-0396">Initiation factor</keyword>
<keyword id="KW-0648">Protein biosynthesis</keyword>
<keyword id="KW-1185">Reference proteome</keyword>
<keyword id="KW-0694">RNA-binding</keyword>
<keyword id="KW-0699">rRNA-binding</keyword>
<gene>
    <name evidence="1" type="primary">infA</name>
    <name type="ordered locus">DIP0545</name>
</gene>
<proteinExistence type="inferred from homology"/>
<evidence type="ECO:0000255" key="1">
    <source>
        <dbReference type="HAMAP-Rule" id="MF_00075"/>
    </source>
</evidence>